<protein>
    <recommendedName>
        <fullName evidence="10">Sodium-dependent neutral amino acid transporter B(0)AT3</fullName>
    </recommendedName>
    <alternativeName>
        <fullName>Sodium- and chloride-dependent transporter XTRP2</fullName>
    </alternativeName>
    <alternativeName>
        <fullName>Solute carrier family 6 member 18</fullName>
    </alternativeName>
    <alternativeName>
        <fullName>System B(0) neutral amino acid transporter AT3</fullName>
    </alternativeName>
</protein>
<feature type="chain" id="PRO_0000214807" description="Sodium-dependent neutral amino acid transporter B(0)AT3">
    <location>
        <begin position="1"/>
        <end position="615"/>
    </location>
</feature>
<feature type="topological domain" description="Cytoplasmic" evidence="1">
    <location>
        <begin position="1"/>
        <end position="26"/>
    </location>
</feature>
<feature type="transmembrane region" description="Helical; Name=1" evidence="1">
    <location>
        <begin position="27"/>
        <end position="47"/>
    </location>
</feature>
<feature type="topological domain" description="Extracellular" evidence="1">
    <location>
        <begin position="48"/>
        <end position="52"/>
    </location>
</feature>
<feature type="transmembrane region" description="Helical; Name=2" evidence="1">
    <location>
        <begin position="53"/>
        <end position="73"/>
    </location>
</feature>
<feature type="topological domain" description="Cytoplasmic" evidence="1">
    <location>
        <begin position="74"/>
        <end position="105"/>
    </location>
</feature>
<feature type="transmembrane region" description="Helical; Name=3" evidence="1">
    <location>
        <begin position="106"/>
        <end position="126"/>
    </location>
</feature>
<feature type="topological domain" description="Extracellular" evidence="1">
    <location>
        <begin position="127"/>
        <end position="177"/>
    </location>
</feature>
<feature type="transmembrane region" description="Helical; Name=4" evidence="1">
    <location>
        <begin position="178"/>
        <end position="198"/>
    </location>
</feature>
<feature type="topological domain" description="Cytoplasmic" evidence="1">
    <location>
        <begin position="199"/>
        <end position="206"/>
    </location>
</feature>
<feature type="transmembrane region" description="Helical; Name=5" evidence="1">
    <location>
        <begin position="207"/>
        <end position="227"/>
    </location>
</feature>
<feature type="topological domain" description="Extracellular" evidence="1">
    <location>
        <begin position="228"/>
        <end position="255"/>
    </location>
</feature>
<feature type="transmembrane region" description="Helical; Name=6" evidence="1">
    <location>
        <begin position="256"/>
        <end position="276"/>
    </location>
</feature>
<feature type="topological domain" description="Cytoplasmic" evidence="1">
    <location>
        <begin position="277"/>
        <end position="288"/>
    </location>
</feature>
<feature type="transmembrane region" description="Helical; Name=7" evidence="1">
    <location>
        <begin position="289"/>
        <end position="309"/>
    </location>
</feature>
<feature type="topological domain" description="Extracellular" evidence="1">
    <location>
        <begin position="310"/>
        <end position="397"/>
    </location>
</feature>
<feature type="transmembrane region" description="Helical; Name=8" evidence="1">
    <location>
        <begin position="398"/>
        <end position="418"/>
    </location>
</feature>
<feature type="topological domain" description="Cytoplasmic" evidence="1">
    <location>
        <begin position="419"/>
        <end position="441"/>
    </location>
</feature>
<feature type="transmembrane region" description="Helical; Name=9" evidence="1">
    <location>
        <begin position="442"/>
        <end position="462"/>
    </location>
</feature>
<feature type="topological domain" description="Extracellular" evidence="1">
    <location>
        <begin position="463"/>
        <end position="472"/>
    </location>
</feature>
<feature type="transmembrane region" description="Helical; Name=10" evidence="1">
    <location>
        <begin position="473"/>
        <end position="493"/>
    </location>
</feature>
<feature type="topological domain" description="Cytoplasmic" evidence="1">
    <location>
        <begin position="494"/>
        <end position="520"/>
    </location>
</feature>
<feature type="transmembrane region" description="Helical; Name=11" evidence="1">
    <location>
        <begin position="521"/>
        <end position="541"/>
    </location>
</feature>
<feature type="topological domain" description="Extracellular" evidence="1">
    <location>
        <begin position="542"/>
        <end position="570"/>
    </location>
</feature>
<feature type="transmembrane region" description="Helical; Name=12" evidence="1">
    <location>
        <begin position="571"/>
        <end position="591"/>
    </location>
</feature>
<feature type="topological domain" description="Cytoplasmic" evidence="1">
    <location>
        <begin position="592"/>
        <end position="615"/>
    </location>
</feature>
<feature type="glycosylation site" description="N-linked (GlcNAc...) asparagine" evidence="2">
    <location>
        <position position="143"/>
    </location>
</feature>
<feature type="glycosylation site" description="N-linked (GlcNAc...) asparagine" evidence="2">
    <location>
        <position position="167"/>
    </location>
</feature>
<feature type="glycosylation site" description="N-linked (GlcNAc...) asparagine" evidence="1">
    <location>
        <position position="353"/>
    </location>
</feature>
<feature type="splice variant" id="VSP_050364" description="In isoform 3 and isoform 5." evidence="9 11">
    <original>SASGPGLAFIVFTEAVLHMPGASVWSVLFFGMLFTLGLSSMFGNMEGVITPLLDMGILPKGIPKEVMT</original>
    <variation>PTWKQISGARVLGEGCARLTSRVCEASVLP</variation>
    <location>
        <begin position="377"/>
        <end position="444"/>
    </location>
</feature>
<feature type="splice variant" id="VSP_050363" description="In isoform 6." evidence="11">
    <original>SASGPGLAFIVFTEAVLHMPGASVWSVLFFGMLFTLGLSSMFGNME</original>
    <variation>VLLCGLCSSLGCCLPWVCPPCLGTWRVSLHHYWTWGSYPKVYPRRS</variation>
    <location>
        <begin position="377"/>
        <end position="422"/>
    </location>
</feature>
<feature type="splice variant" id="VSP_050697" description="In isoform 6." evidence="11">
    <location>
        <begin position="423"/>
        <end position="615"/>
    </location>
</feature>
<feature type="splice variant" id="VSP_050365" description="In isoform 2." evidence="11">
    <location>
        <begin position="445"/>
        <end position="454"/>
    </location>
</feature>
<feature type="splice variant" id="VSP_050366" description="In isoform 4 and isoform 5." evidence="11">
    <original>FCDDIEWMTGRRPGLYWQVTWRVVSPMLLFGIFLSYIVLLIQTPPSYKAWNPQY</original>
    <variation>NIFPQERRSSTQAGCRSPVCSCPSCPHCGSLELLWLSYCPSTNRGGRLRIWKVV</variation>
    <location>
        <begin position="499"/>
        <end position="552"/>
    </location>
</feature>
<feature type="splice variant" id="VSP_050367" description="In isoform 4 and isoform 5." evidence="11">
    <location>
        <begin position="553"/>
        <end position="615"/>
    </location>
</feature>
<feature type="mutagenesis site" description="No effect on protein abundance. Increases localization to the cell membrane. Increases alanine uptake activity." evidence="6">
    <original>D</original>
    <variation>N</variation>
    <location>
        <position position="21"/>
    </location>
</feature>
<feature type="mutagenesis site" description="No effect on protein abundance. Almost complete loss of cell surface localization. Decreases alanine uptake activity." evidence="6">
    <original>Q</original>
    <variation>D</variation>
    <location>
        <position position="25"/>
    </location>
</feature>
<feature type="mutagenesis site" description="No effect on protein abundance. Strong decrease of cell surface localization. Decreases alanine uptake." evidence="6">
    <original>Q</original>
    <variation>V</variation>
    <location>
        <position position="25"/>
    </location>
</feature>
<feature type="mutagenesis site" description="No effect on protein abundance. No effect on cell surface localization. Increases alanine uptake activity." evidence="6">
    <original>H</original>
    <variation>Y</variation>
    <location>
        <position position="50"/>
    </location>
</feature>
<feature type="mutagenesis site" description="No effect on protein abundance. No effect on cell surface localization. No effect on alanine uptake activity." evidence="6">
    <original>Y</original>
    <variation>H</variation>
    <location>
        <position position="72"/>
    </location>
</feature>
<feature type="mutagenesis site" description="No effect on protein abundance. No effect on cell surface expression. Decreases alanine uptake activity." evidence="6">
    <original>G</original>
    <variation>S</variation>
    <location>
        <position position="78"/>
    </location>
</feature>
<feature type="mutagenesis site" description="No effect on protein abundance. No effect on cell surface localization. No effect on alanine uptake activity." evidence="6">
    <original>K</original>
    <variation>T</variation>
    <location>
        <position position="90"/>
    </location>
</feature>
<feature type="mutagenesis site" description="No effect on protein abundance. No effect on cell surface localization. No effect on alanine uptake activity." evidence="6">
    <original>S</original>
    <variation>D</variation>
    <location>
        <position position="158"/>
    </location>
</feature>
<feature type="mutagenesis site" description="No effect on protein abundance. No effect on cell surface localization. Decreases alanine uptake activity." evidence="6">
    <original>L</original>
    <variation>W</variation>
    <location>
        <position position="213"/>
    </location>
</feature>
<feature type="mutagenesis site" description="No effect on protein abundance. Strong decreases of cell surface localization. Decreases alanine uptake." evidence="6">
    <original>R</original>
    <variation>T</variation>
    <location>
        <position position="225"/>
    </location>
</feature>
<feature type="mutagenesis site" description="No effect on protein abundance. Strong decreases of cell surface localization. Decreases alanine uptake." evidence="6">
    <original>N</original>
    <variation>D</variation>
    <location>
        <position position="283"/>
    </location>
</feature>
<feature type="mutagenesis site" description="No effect on protein abundance. Strong decreases of cell surface localization. Decreases alanine uptake." evidence="6">
    <original>D</original>
    <variation>K</variation>
    <location>
        <position position="287"/>
    </location>
</feature>
<feature type="mutagenesis site" description="No effect on protein abundance. Strong decreases of cell surface localization. Decreases alanine uptake activity." evidence="6">
    <original>D</original>
    <variation>N</variation>
    <location>
        <position position="287"/>
    </location>
</feature>
<feature type="mutagenesis site" description="No effect on protein abundance. Strong decreases of cell surface localization. Decreases alanine uptake activity." evidence="6">
    <original>S</original>
    <variation>R</variation>
    <location>
        <position position="296"/>
    </location>
</feature>
<feature type="mutagenesis site" description="No effect on protein abundance. No effect on cell surface localization. No effect on alanine uptake activity." evidence="6">
    <original>M</original>
    <variation>C</variation>
    <location>
        <position position="297"/>
    </location>
</feature>
<feature type="mutagenesis site" description="No effect on protein abundance. No effect on cell surface localization. No effect on alanine uptake activity." evidence="6">
    <original>M</original>
    <variation>S</variation>
    <location>
        <position position="297"/>
    </location>
</feature>
<feature type="mutagenesis site" description="No effect on protein abundance. No effect on cell surface localization. No effect on alanine uptake activity." evidence="6">
    <original>I</original>
    <variation>T</variation>
    <location>
        <position position="456"/>
    </location>
</feature>
<feature type="mutagenesis site" description="No effect on protein abundance. No effect on cell surface localization. No effect on alanine uptake activity." evidence="6">
    <original>G</original>
    <variation>N</variation>
    <location>
        <position position="464"/>
    </location>
</feature>
<feature type="mutagenesis site" description="No effect on protein abundance. No effect on cell surface localization. No effect on alanine uptake activity." evidence="6">
    <original>L</original>
    <variation>P</variation>
    <location>
        <position position="477"/>
    </location>
</feature>
<feature type="mutagenesis site" description="No effect on protein abundance. Strong decreases of cell surface localization. Decreases alanine uptake activity." evidence="6">
    <original>G</original>
    <variation>R</variation>
    <location>
        <position position="495"/>
    </location>
</feature>
<feature type="mutagenesis site" description="Decreases protein abundance. Strong decreases of cell surface localization. Strong decreases on alanine uptake activity." evidence="6">
    <original>D</original>
    <variation>N</variation>
    <location>
        <position position="502"/>
    </location>
</feature>
<feature type="mutagenesis site" description="No effect on protein abundance. No effect on cell surface localization. No effect on alanine uptake activity." evidence="6">
    <original>Q</original>
    <variation>R</variation>
    <location>
        <position position="568"/>
    </location>
</feature>
<gene>
    <name evidence="13" type="primary">Slc6a18</name>
    <name evidence="10" type="synonym">B0at3</name>
    <name evidence="8" type="synonym">Xt2</name>
    <name type="synonym">Xtrp2</name>
</gene>
<accession>O88576</accession>
<accession>O88577</accession>
<accession>O88578</accession>
<accession>O88579</accession>
<accession>O88580</accession>
<accession>O88581</accession>
<accession>Q91XG6</accession>
<organism>
    <name type="scientific">Mus musculus</name>
    <name type="common">Mouse</name>
    <dbReference type="NCBI Taxonomy" id="10090"/>
    <lineage>
        <taxon>Eukaryota</taxon>
        <taxon>Metazoa</taxon>
        <taxon>Chordata</taxon>
        <taxon>Craniata</taxon>
        <taxon>Vertebrata</taxon>
        <taxon>Euteleostomi</taxon>
        <taxon>Mammalia</taxon>
        <taxon>Eutheria</taxon>
        <taxon>Euarchontoglires</taxon>
        <taxon>Glires</taxon>
        <taxon>Rodentia</taxon>
        <taxon>Myomorpha</taxon>
        <taxon>Muroidea</taxon>
        <taxon>Muridae</taxon>
        <taxon>Murinae</taxon>
        <taxon>Mus</taxon>
        <taxon>Mus</taxon>
    </lineage>
</organism>
<dbReference type="EMBL" id="AF075262">
    <property type="protein sequence ID" value="AAC27757.1"/>
    <property type="molecule type" value="mRNA"/>
</dbReference>
<dbReference type="EMBL" id="AF075263">
    <property type="protein sequence ID" value="AAC27758.1"/>
    <property type="molecule type" value="mRNA"/>
</dbReference>
<dbReference type="EMBL" id="AF075264">
    <property type="protein sequence ID" value="AAC27759.1"/>
    <property type="molecule type" value="mRNA"/>
</dbReference>
<dbReference type="EMBL" id="AF075265">
    <property type="protein sequence ID" value="AAC27760.1"/>
    <property type="molecule type" value="mRNA"/>
</dbReference>
<dbReference type="EMBL" id="AF075266">
    <property type="protein sequence ID" value="AAC27761.1"/>
    <property type="molecule type" value="mRNA"/>
</dbReference>
<dbReference type="EMBL" id="AF075267">
    <property type="protein sequence ID" value="AAC27762.1"/>
    <property type="molecule type" value="mRNA"/>
</dbReference>
<dbReference type="EMBL" id="BC010748">
    <property type="protein sequence ID" value="AAH10748.1"/>
    <property type="molecule type" value="mRNA"/>
</dbReference>
<dbReference type="CCDS" id="CCDS36727.1">
    <molecule id="O88576-1"/>
</dbReference>
<dbReference type="CCDS" id="CCDS49311.1">
    <molecule id="O88576-3"/>
</dbReference>
<dbReference type="CCDS" id="CCDS49312.1">
    <molecule id="O88576-4"/>
</dbReference>
<dbReference type="CCDS" id="CCDS88479.1">
    <molecule id="O88576-5"/>
</dbReference>
<dbReference type="CCDS" id="CCDS88481.1">
    <molecule id="O88576-2"/>
</dbReference>
<dbReference type="RefSeq" id="NP_001035782.1">
    <molecule id="O88576-1"/>
    <property type="nucleotide sequence ID" value="NM_001040692.3"/>
</dbReference>
<dbReference type="RefSeq" id="NP_001129559.1">
    <molecule id="O88576-3"/>
    <property type="nucleotide sequence ID" value="NM_001136087.2"/>
</dbReference>
<dbReference type="RefSeq" id="NP_001162115.1">
    <molecule id="O88576-4"/>
    <property type="nucleotide sequence ID" value="NM_001168644.1"/>
</dbReference>
<dbReference type="RefSeq" id="NP_001162116.1">
    <molecule id="O88576-5"/>
    <property type="nucleotide sequence ID" value="NM_001168645.1"/>
</dbReference>
<dbReference type="RefSeq" id="NP_001162117.1">
    <molecule id="O88576-2"/>
    <property type="nucleotide sequence ID" value="NM_001168646.1"/>
</dbReference>
<dbReference type="SMR" id="O88576"/>
<dbReference type="CORUM" id="O88576"/>
<dbReference type="DIP" id="DIP-60421N"/>
<dbReference type="FunCoup" id="O88576">
    <property type="interactions" value="15"/>
</dbReference>
<dbReference type="IntAct" id="O88576">
    <property type="interactions" value="1"/>
</dbReference>
<dbReference type="STRING" id="10090.ENSMUSP00000152525"/>
<dbReference type="GlyCosmos" id="O88576">
    <property type="glycosylation" value="1 site, No reported glycans"/>
</dbReference>
<dbReference type="GlyGen" id="O88576">
    <property type="glycosylation" value="3 sites"/>
</dbReference>
<dbReference type="iPTMnet" id="O88576"/>
<dbReference type="PhosphoSitePlus" id="O88576"/>
<dbReference type="jPOST" id="O88576"/>
<dbReference type="PaxDb" id="10090-ENSMUSP00000022105"/>
<dbReference type="ProteomicsDB" id="260802">
    <molecule id="O88576-1"/>
</dbReference>
<dbReference type="ProteomicsDB" id="260803">
    <molecule id="O88576-2"/>
</dbReference>
<dbReference type="ProteomicsDB" id="260804">
    <molecule id="O88576-3"/>
</dbReference>
<dbReference type="ProteomicsDB" id="260805">
    <molecule id="O88576-4"/>
</dbReference>
<dbReference type="ProteomicsDB" id="260806">
    <molecule id="O88576-5"/>
</dbReference>
<dbReference type="ProteomicsDB" id="260807">
    <molecule id="O88576-6"/>
</dbReference>
<dbReference type="Antibodypedia" id="1938">
    <property type="antibodies" value="73 antibodies from 23 providers"/>
</dbReference>
<dbReference type="DNASU" id="22598"/>
<dbReference type="Ensembl" id="ENSMUST00000109679.4">
    <molecule id="O88576-4"/>
    <property type="protein sequence ID" value="ENSMUSP00000105301.3"/>
    <property type="gene ID" value="ENSMUSG00000021612.16"/>
</dbReference>
<dbReference type="Ensembl" id="ENSMUST00000109680.10">
    <molecule id="O88576-3"/>
    <property type="protein sequence ID" value="ENSMUSP00000105302.3"/>
    <property type="gene ID" value="ENSMUSG00000021612.16"/>
</dbReference>
<dbReference type="Ensembl" id="ENSMUST00000220650.2">
    <molecule id="O88576-5"/>
    <property type="protein sequence ID" value="ENSMUSP00000152403.2"/>
    <property type="gene ID" value="ENSMUSG00000021612.16"/>
</dbReference>
<dbReference type="Ensembl" id="ENSMUST00000222029.2">
    <molecule id="O88576-1"/>
    <property type="protein sequence ID" value="ENSMUSP00000152525.2"/>
    <property type="gene ID" value="ENSMUSG00000021612.16"/>
</dbReference>
<dbReference type="Ensembl" id="ENSMUST00000223026.2">
    <molecule id="O88576-6"/>
    <property type="protein sequence ID" value="ENSMUSP00000152516.2"/>
    <property type="gene ID" value="ENSMUSG00000021612.16"/>
</dbReference>
<dbReference type="Ensembl" id="ENSMUST00000223074.2">
    <molecule id="O88576-2"/>
    <property type="protein sequence ID" value="ENSMUSP00000152146.2"/>
    <property type="gene ID" value="ENSMUSG00000021612.16"/>
</dbReference>
<dbReference type="GeneID" id="22598"/>
<dbReference type="KEGG" id="mmu:22598"/>
<dbReference type="UCSC" id="uc007rds.2">
    <molecule id="O88576-1"/>
    <property type="organism name" value="mouse"/>
</dbReference>
<dbReference type="UCSC" id="uc007rdt.2">
    <molecule id="O88576-2"/>
    <property type="organism name" value="mouse"/>
</dbReference>
<dbReference type="UCSC" id="uc007rdu.2">
    <molecule id="O88576-3"/>
    <property type="organism name" value="mouse"/>
</dbReference>
<dbReference type="UCSC" id="uc007rdv.2">
    <molecule id="O88576-4"/>
    <property type="organism name" value="mouse"/>
</dbReference>
<dbReference type="UCSC" id="uc007rdw.2">
    <molecule id="O88576-5"/>
    <property type="organism name" value="mouse"/>
</dbReference>
<dbReference type="AGR" id="MGI:1336892"/>
<dbReference type="CTD" id="348932"/>
<dbReference type="MGI" id="MGI:1336892">
    <property type="gene designation" value="Slc6a18"/>
</dbReference>
<dbReference type="VEuPathDB" id="HostDB:ENSMUSG00000021612"/>
<dbReference type="eggNOG" id="KOG3659">
    <property type="taxonomic scope" value="Eukaryota"/>
</dbReference>
<dbReference type="GeneTree" id="ENSGT00940000158906"/>
<dbReference type="HOGENOM" id="CLU_006855_7_2_1"/>
<dbReference type="InParanoid" id="O88576"/>
<dbReference type="OMA" id="VLTWVMW"/>
<dbReference type="OrthoDB" id="6581954at2759"/>
<dbReference type="PhylomeDB" id="O88576"/>
<dbReference type="TreeFam" id="TF343812"/>
<dbReference type="Reactome" id="R-MMU-352230">
    <property type="pathway name" value="Amino acid transport across the plasma membrane"/>
</dbReference>
<dbReference type="Reactome" id="R-MMU-442660">
    <property type="pathway name" value="Na+/Cl- dependent neurotransmitter transporters"/>
</dbReference>
<dbReference type="BioGRID-ORCS" id="22598">
    <property type="hits" value="2 hits in 75 CRISPR screens"/>
</dbReference>
<dbReference type="ChiTaRS" id="Slc6a18">
    <property type="organism name" value="mouse"/>
</dbReference>
<dbReference type="PRO" id="PR:O88576"/>
<dbReference type="Proteomes" id="UP000000589">
    <property type="component" value="Chromosome 13"/>
</dbReference>
<dbReference type="RNAct" id="O88576">
    <property type="molecule type" value="protein"/>
</dbReference>
<dbReference type="Bgee" id="ENSMUSG00000021612">
    <property type="expression patterns" value="Expressed in right kidney and 33 other cell types or tissues"/>
</dbReference>
<dbReference type="ExpressionAtlas" id="O88576">
    <property type="expression patterns" value="baseline and differential"/>
</dbReference>
<dbReference type="GO" id="GO:0016324">
    <property type="term" value="C:apical plasma membrane"/>
    <property type="evidence" value="ECO:0000314"/>
    <property type="project" value="UniProtKB"/>
</dbReference>
<dbReference type="GO" id="GO:0031526">
    <property type="term" value="C:brush border membrane"/>
    <property type="evidence" value="ECO:0000314"/>
    <property type="project" value="MGI"/>
</dbReference>
<dbReference type="GO" id="GO:0005886">
    <property type="term" value="C:plasma membrane"/>
    <property type="evidence" value="ECO:0000314"/>
    <property type="project" value="UniProtKB"/>
</dbReference>
<dbReference type="GO" id="GO:0015175">
    <property type="term" value="F:neutral L-amino acid transmembrane transporter activity"/>
    <property type="evidence" value="ECO:0000315"/>
    <property type="project" value="UniProtKB"/>
</dbReference>
<dbReference type="GO" id="GO:0140931">
    <property type="term" value="F:neutral L-amino acid:sodium:chloride symporter activity"/>
    <property type="evidence" value="ECO:0000314"/>
    <property type="project" value="UniProtKB"/>
</dbReference>
<dbReference type="GO" id="GO:0003333">
    <property type="term" value="P:amino acid transmembrane transport"/>
    <property type="evidence" value="ECO:0000314"/>
    <property type="project" value="MGI"/>
</dbReference>
<dbReference type="GO" id="GO:0006836">
    <property type="term" value="P:neurotransmitter transport"/>
    <property type="evidence" value="ECO:0007669"/>
    <property type="project" value="UniProtKB-KW"/>
</dbReference>
<dbReference type="GO" id="GO:0015804">
    <property type="term" value="P:neutral amino acid transport"/>
    <property type="evidence" value="ECO:0000314"/>
    <property type="project" value="UniProtKB"/>
</dbReference>
<dbReference type="GO" id="GO:1990297">
    <property type="term" value="P:renal amino acid absorption"/>
    <property type="evidence" value="ECO:0000315"/>
    <property type="project" value="UniProtKB"/>
</dbReference>
<dbReference type="CDD" id="cd11517">
    <property type="entry name" value="SLC6sbd_B0AT3"/>
    <property type="match status" value="1"/>
</dbReference>
<dbReference type="InterPro" id="IPR042701">
    <property type="entry name" value="B0AT3_SLC6sbd"/>
</dbReference>
<dbReference type="InterPro" id="IPR000175">
    <property type="entry name" value="Na/ntran_symport"/>
</dbReference>
<dbReference type="InterPro" id="IPR002438">
    <property type="entry name" value="Neutral_aa_SLC6"/>
</dbReference>
<dbReference type="InterPro" id="IPR037272">
    <property type="entry name" value="SNS_sf"/>
</dbReference>
<dbReference type="PANTHER" id="PTHR11616:SF109">
    <property type="entry name" value="INACTIVE SODIUM-DEPENDENT NEUTRAL AMINO ACID TRANSPORTER B(0)AT3"/>
    <property type="match status" value="1"/>
</dbReference>
<dbReference type="PANTHER" id="PTHR11616">
    <property type="entry name" value="SODIUM/CHLORIDE DEPENDENT TRANSPORTER"/>
    <property type="match status" value="1"/>
</dbReference>
<dbReference type="Pfam" id="PF00209">
    <property type="entry name" value="SNF"/>
    <property type="match status" value="1"/>
</dbReference>
<dbReference type="PRINTS" id="PR00176">
    <property type="entry name" value="NANEUSMPORT"/>
</dbReference>
<dbReference type="PRINTS" id="PR01206">
    <property type="entry name" value="ORPHTRNSPORT"/>
</dbReference>
<dbReference type="SUPFAM" id="SSF161070">
    <property type="entry name" value="SNF-like"/>
    <property type="match status" value="1"/>
</dbReference>
<dbReference type="PROSITE" id="PS00610">
    <property type="entry name" value="NA_NEUROTRAN_SYMP_1"/>
    <property type="match status" value="1"/>
</dbReference>
<dbReference type="PROSITE" id="PS00754">
    <property type="entry name" value="NA_NEUROTRAN_SYMP_2"/>
    <property type="match status" value="1"/>
</dbReference>
<dbReference type="PROSITE" id="PS50267">
    <property type="entry name" value="NA_NEUROTRAN_SYMP_3"/>
    <property type="match status" value="1"/>
</dbReference>
<proteinExistence type="evidence at protein level"/>
<comment type="function">
    <text evidence="4 5 6">Symporter that transports one amino acid molecule together with two sodium and one chloride ions in kidneys and plays a role in the neutral amino acids reabsorption (PubMed:19478081, PubMed:20377526, PubMed:26240152). Preferentially transports neutral amino acids such as L-glycine and L-alanine but also other neutral amino acids (PubMed:19478081, PubMed:20377526, PubMed:26240152). Required CLTRN for cell surface expression and for its amino acid transporter activity (PubMed:20377526, PubMed:26240152). The transport mechanism is pH-independent (PubMed:19478081).</text>
</comment>
<comment type="catalytic activity">
    <reaction evidence="4 5 6">
        <text>L-alanine(out) + chloride(out) + 2 Na(+)(out) = L-alanine(in) + chloride(in) + 2 Na(+)(in)</text>
        <dbReference type="Rhea" id="RHEA:71311"/>
        <dbReference type="ChEBI" id="CHEBI:17996"/>
        <dbReference type="ChEBI" id="CHEBI:29101"/>
        <dbReference type="ChEBI" id="CHEBI:57972"/>
    </reaction>
</comment>
<comment type="catalytic activity">
    <reaction evidence="4 5">
        <text>glycine(out) + chloride(out) + 2 Na(+)(out) = glycine(in) + chloride(in) + 2 Na(+)(in)</text>
        <dbReference type="Rhea" id="RHEA:70691"/>
        <dbReference type="ChEBI" id="CHEBI:17996"/>
        <dbReference type="ChEBI" id="CHEBI:29101"/>
        <dbReference type="ChEBI" id="CHEBI:57305"/>
    </reaction>
</comment>
<comment type="catalytic activity">
    <reaction evidence="4 5">
        <text>L-methionine(out) + chloride(out) + 2 Na(+)(out) = L-methionine(in) + chloride(in) + 2 Na(+)(in)</text>
        <dbReference type="Rhea" id="RHEA:71303"/>
        <dbReference type="ChEBI" id="CHEBI:17996"/>
        <dbReference type="ChEBI" id="CHEBI:29101"/>
        <dbReference type="ChEBI" id="CHEBI:57844"/>
    </reaction>
</comment>
<comment type="catalytic activity">
    <reaction evidence="4">
        <text>L-valine(out) + chloride(out) + 2 Na(+)(out) = L-valine(in) + chloride(in) + 2 Na(+)(in)</text>
        <dbReference type="Rhea" id="RHEA:71307"/>
        <dbReference type="ChEBI" id="CHEBI:17996"/>
        <dbReference type="ChEBI" id="CHEBI:29101"/>
        <dbReference type="ChEBI" id="CHEBI:57762"/>
    </reaction>
</comment>
<comment type="catalytic activity">
    <reaction evidence="4">
        <text>L-isoleucine(out) + chloride(out) + 2 Na(+)(out) = L-isoleucine(in) + chloride(in) + 2 Na(+)(in)</text>
        <dbReference type="Rhea" id="RHEA:71299"/>
        <dbReference type="ChEBI" id="CHEBI:17996"/>
        <dbReference type="ChEBI" id="CHEBI:29101"/>
        <dbReference type="ChEBI" id="CHEBI:58045"/>
    </reaction>
</comment>
<comment type="catalytic activity">
    <reaction evidence="4">
        <text>L-serine(out) + chloride(out) + 2 Na(+)(out) = L-serine(in) + chloride(in) + 2 Na(+)(in)</text>
        <dbReference type="Rhea" id="RHEA:71315"/>
        <dbReference type="ChEBI" id="CHEBI:17996"/>
        <dbReference type="ChEBI" id="CHEBI:29101"/>
        <dbReference type="ChEBI" id="CHEBI:33384"/>
    </reaction>
</comment>
<comment type="catalytic activity">
    <reaction evidence="4 5">
        <text>L-leucine(out) + chloride(out) + 2 Na(+)(out) = L-leucine(in) + chloride(in) + 2 Na(+)(in)</text>
        <dbReference type="Rhea" id="RHEA:71279"/>
        <dbReference type="ChEBI" id="CHEBI:17996"/>
        <dbReference type="ChEBI" id="CHEBI:29101"/>
        <dbReference type="ChEBI" id="CHEBI:57427"/>
    </reaction>
</comment>
<comment type="biophysicochemical properties">
    <kinetics>
        <KM evidence="6">0.79 mM for L-alanine (in the presence of CLTRN)</KM>
        <KM evidence="6">0.14 mM for L-alanine (in the presence of ACE2)</KM>
        <KM evidence="6">0.99 mM for L-glycine (in the presence of CLTRN)</KM>
        <KM evidence="6">0.27 mM for L-glycine (in the presence of ACE2)</KM>
        <KM evidence="5">0.9 mM for L-alanine (in the presence of CLTRN)</KM>
        <KM evidence="5">2.3 mM for L-glycine (in the presence of CLTRN)</KM>
    </kinetics>
</comment>
<comment type="subunit">
    <text evidence="4 6">Interacts with CLTRN; this interaction regulates the trafficking of SLC6A18 to the cell membrane and its activity.</text>
</comment>
<comment type="subcellular location">
    <subcellularLocation>
        <location evidence="4 5">Apical cell membrane</location>
        <topology evidence="1">Multi-pass membrane protein</topology>
    </subcellularLocation>
    <subcellularLocation>
        <location evidence="5 6">Cell membrane</location>
        <topology evidence="1">Multi-pass membrane protein</topology>
    </subcellularLocation>
    <text evidence="4 5">In kidneys localizes to the apical membrane in distal segments of the proximal tubule (PubMed:19478081, PubMed:20377526). Cell membrane expression is CLTRN-dependent (PubMed:20377526).</text>
</comment>
<comment type="alternative products">
    <event type="alternative splicing"/>
    <isoform>
        <id>O88576-1</id>
        <name>1</name>
        <name>A12</name>
        <sequence type="displayed"/>
    </isoform>
    <isoform>
        <id>O88576-2</id>
        <name>2</name>
        <name>A11</name>
        <sequence type="described" ref="VSP_050365"/>
    </isoform>
    <isoform>
        <id>O88576-3</id>
        <name>3</name>
        <name>B11</name>
        <sequence type="described" ref="VSP_050364"/>
    </isoform>
    <isoform>
        <id>O88576-4</id>
        <name>4</name>
        <name>A10</name>
        <sequence type="described" ref="VSP_050366 VSP_050367"/>
    </isoform>
    <isoform>
        <id>O88576-5</id>
        <name>5</name>
        <name>B9</name>
        <sequence type="described" ref="VSP_050364 VSP_050366 VSP_050367"/>
    </isoform>
    <isoform>
        <id>O88576-6</id>
        <name>6</name>
        <name>A8</name>
        <sequence type="described" ref="VSP_050363 VSP_050697"/>
    </isoform>
</comment>
<comment type="tissue specificity">
    <text evidence="7">Expressed predominantly in kidney.</text>
</comment>
<comment type="developmental stage">
    <text evidence="5">Barely detectable at post natal day 0, reaching maximum expression after the third week of life.</text>
</comment>
<comment type="disruption phenotype">
    <text evidence="3">Animals lacking this protein exhibit no gross abnormalities and grow to adulthood, although they do exhibit hypertension. The elevated blood pressure appears to be attributable to a decreased level of renal glycine. High-affinity renal reabsorption of glycine is eliminated and intrarenal glycine concentration is reduced.</text>
</comment>
<comment type="similarity">
    <text evidence="12">Belongs to the sodium:neurotransmitter symporter (SNF) (TC 2.A.22) family. SLC6A18 subfamily.</text>
</comment>
<comment type="caution">
    <text evidence="6">Human SLC6A18 has been shown to be an inactive protein.</text>
</comment>
<reference key="1">
    <citation type="journal article" date="1998" name="Recept. Channels">
        <title>Cloning, gene structure, and genomic localization of an orphan transporter from mouse kidney with six alternatively-spliced isoforms.</title>
        <authorList>
            <person name="Nash S.R."/>
            <person name="Giros B."/>
            <person name="Kingsmore S.F."/>
            <person name="Kim K.M."/>
            <person name="El-Mestikawy S."/>
            <person name="Dong Q."/>
            <person name="Fumagalli F."/>
            <person name="Seldin M.F."/>
            <person name="Caron M.G."/>
        </authorList>
    </citation>
    <scope>NUCLEOTIDE SEQUENCE [MRNA] (ISOFORMS 1; 2; 3; 4; 5 AND 6)</scope>
    <scope>TISSUE SPECIFICITY</scope>
    <source>
        <tissue>Kidney</tissue>
    </source>
</reference>
<reference key="2">
    <citation type="journal article" date="2004" name="Genome Res.">
        <title>The status, quality, and expansion of the NIH full-length cDNA project: the Mammalian Gene Collection (MGC).</title>
        <authorList>
            <consortium name="The MGC Project Team"/>
        </authorList>
    </citation>
    <scope>NUCLEOTIDE SEQUENCE [LARGE SCALE MRNA] (ISOFORM 3)</scope>
    <source>
        <tissue>Kidney</tissue>
    </source>
</reference>
<reference key="3">
    <citation type="journal article" date="2004" name="Mol. Cell. Biol.">
        <title>Hypertension and impaired glycine handling in mice lacking the orphan transporter XT2.</title>
        <authorList>
            <person name="Quan H."/>
            <person name="Athirakul K."/>
            <person name="Wetsel W.C."/>
            <person name="Torres G.E."/>
            <person name="Stevens R."/>
            <person name="Chen Y.T."/>
            <person name="Coffman T.M."/>
            <person name="Caron M.G."/>
        </authorList>
    </citation>
    <scope>DISRUPTION PHENOTYPE</scope>
</reference>
<reference key="4">
    <citation type="journal article" date="2009" name="J. Biol. Chem.">
        <title>Orphan transporter SLC6A18 is renal neutral amino acid transporter B0AT3.</title>
        <authorList>
            <person name="Singer D."/>
            <person name="Camargo S.M."/>
            <person name="Huggel K."/>
            <person name="Romeo E."/>
            <person name="Danilczyk U."/>
            <person name="Kuba K."/>
            <person name="Chesnov S."/>
            <person name="Caron M.G."/>
            <person name="Penninger J.M."/>
            <person name="Verrey F."/>
        </authorList>
    </citation>
    <scope>FUNCTION</scope>
    <scope>TRANSPORTER ACTIVITY</scope>
    <scope>SUBCELLULAR LOCATION</scope>
    <scope>INTERACTION WITH CLTRN</scope>
</reference>
<reference key="5">
    <citation type="journal article" date="2010" name="Biochem. J.">
        <title>Renal imino acid and glycine transport system ontogeny and involvement in developmental iminoglycinuria.</title>
        <authorList>
            <person name="Vanslambrouck J.M."/>
            <person name="Broeer A."/>
            <person name="Thavyogarajah T."/>
            <person name="Holst J."/>
            <person name="Bailey C.G."/>
            <person name="Broeer S."/>
            <person name="Rasko J.E."/>
        </authorList>
    </citation>
    <scope>FUNCTION</scope>
    <scope>TRANSPORTER ACTIVITY</scope>
    <scope>BIOPHYSICOCHEMICAL PROPERTIES</scope>
    <scope>DEVELOPMENTAL STAGE</scope>
    <scope>SUBCELLULAR LOCATION</scope>
</reference>
<reference key="6">
    <citation type="journal article" date="2010" name="Cell">
        <title>A tissue-specific atlas of mouse protein phosphorylation and expression.</title>
        <authorList>
            <person name="Huttlin E.L."/>
            <person name="Jedrychowski M.P."/>
            <person name="Elias J.E."/>
            <person name="Goswami T."/>
            <person name="Rad R."/>
            <person name="Beausoleil S.A."/>
            <person name="Villen J."/>
            <person name="Haas W."/>
            <person name="Sowa M.E."/>
            <person name="Gygi S.P."/>
        </authorList>
    </citation>
    <scope>IDENTIFICATION BY MASS SPECTROMETRY [LARGE SCALE ANALYSIS]</scope>
    <source>
        <tissue>Kidney</tissue>
    </source>
</reference>
<reference key="7">
    <citation type="journal article" date="2015" name="J. Biol. Chem.">
        <title>Molecular basis for the interaction of the mammalian amino acid transporters B0AT1 and B0AT3 with their ancillary protein collectrin.</title>
        <authorList>
            <person name="Fairweather S.J."/>
            <person name="Broeer A."/>
            <person name="Subramanian N."/>
            <person name="Tumer E."/>
            <person name="Cheng Q."/>
            <person name="Schmoll D."/>
            <person name="O'Mara M.L."/>
            <person name="Broeer S."/>
        </authorList>
    </citation>
    <scope>FUNCTION</scope>
    <scope>TRANSPORTER ACTIVITY</scope>
    <scope>BIOPHYSICOCHEMICAL PROPERTIES</scope>
    <scope>SUBCELLULAR LOCATION</scope>
    <scope>MUTAGENESIS OF ASP-21; GLN-25; HIS-50; TYR-72; GLY-78; LYS-90; SER-158; LEU-213; ARG-225; ASN-283; ASP-287; SER-296; MET-297; ILE-456; GLY-464; LEU-477; GLY-495; ASP-502 AND GLN-568</scope>
</reference>
<evidence type="ECO:0000255" key="1"/>
<evidence type="ECO:0000255" key="2">
    <source>
        <dbReference type="PROSITE-ProRule" id="PRU00498"/>
    </source>
</evidence>
<evidence type="ECO:0000269" key="3">
    <source>
    </source>
</evidence>
<evidence type="ECO:0000269" key="4">
    <source>
    </source>
</evidence>
<evidence type="ECO:0000269" key="5">
    <source>
    </source>
</evidence>
<evidence type="ECO:0000269" key="6">
    <source>
    </source>
</evidence>
<evidence type="ECO:0000269" key="7">
    <source>
    </source>
</evidence>
<evidence type="ECO:0000303" key="8">
    <source>
    </source>
</evidence>
<evidence type="ECO:0000303" key="9">
    <source>
    </source>
</evidence>
<evidence type="ECO:0000303" key="10">
    <source>
    </source>
</evidence>
<evidence type="ECO:0000303" key="11">
    <source>
    </source>
</evidence>
<evidence type="ECO:0000305" key="12"/>
<evidence type="ECO:0000312" key="13">
    <source>
        <dbReference type="MGI" id="MGI:1336892"/>
    </source>
</evidence>
<keyword id="KW-0025">Alternative splicing</keyword>
<keyword id="KW-0029">Amino-acid transport</keyword>
<keyword id="KW-1003">Cell membrane</keyword>
<keyword id="KW-0325">Glycoprotein</keyword>
<keyword id="KW-0472">Membrane</keyword>
<keyword id="KW-0532">Neurotransmitter transport</keyword>
<keyword id="KW-1185">Reference proteome</keyword>
<keyword id="KW-0769">Symport</keyword>
<keyword id="KW-0812">Transmembrane</keyword>
<keyword id="KW-1133">Transmembrane helix</keyword>
<keyword id="KW-0813">Transport</keyword>
<sequence>MAQASGMDPLVDIEDERPKWDNKLQYLLSCIGFAVGLGNIWRFPYLCQTHGGGAFLIPYFIALVFEGIPLFYIELAIGQRLRRGSIGVWKTISPYLGGVGLGCFSVSFLVSLYYNTVLLWVLWFFLNSFQHPLPWSTCPLDLNRTGFVQECQSSGTVSYFWYRQTLNITSDISNTGTIQWKLFLCLVACWSTVYLCVIRGIESTGKVIYFTALFPYLVLTIFLIRGLTLPGATEGLIYLFTPNMKTLQNPRVWLDAATQIFFSLSLAFGGHIAFASYNPPRNNCEKDAVIIALVNSMTSLYASIAIFSVMGFKASNDYGRCLDRNILSLINEFDLPELSISRDEYPSVLMYLNATQTARVAQLPLKTCHLEDFLDKSASGPGLAFIVFTEAVLHMPGASVWSVLFFGMLFTLGLSSMFGNMEGVITPLLDMGILPKGIPKEVMTGVICFACFLSAICFTLQSGGYWLEIFDSFAASLNLIIFAFMEVVGVIHIYGMKRFCDDIEWMTGRRPGLYWQVTWRVVSPMLLFGIFLSYIVLLIQTPPSYKAWNPQYEHFPSREEKFYPGWVQVTCVLLSFLPSLWVPGVALAQLLSQYKQRWKATHLESGLKLQESRGC</sequence>
<name>S6A18_MOUSE</name>